<gene>
    <name type="primary">PRDM12</name>
    <name type="synonym">PFM9</name>
</gene>
<evidence type="ECO:0000250" key="1">
    <source>
        <dbReference type="UniProtKB" id="A2AJ77"/>
    </source>
</evidence>
<evidence type="ECO:0000255" key="2">
    <source>
        <dbReference type="PROSITE-ProRule" id="PRU00042"/>
    </source>
</evidence>
<evidence type="ECO:0000255" key="3">
    <source>
        <dbReference type="PROSITE-ProRule" id="PRU00190"/>
    </source>
</evidence>
<evidence type="ECO:0000256" key="4">
    <source>
        <dbReference type="SAM" id="MobiDB-lite"/>
    </source>
</evidence>
<evidence type="ECO:0000269" key="5">
    <source>
    </source>
</evidence>
<evidence type="ECO:0007829" key="6">
    <source>
        <dbReference type="PDB" id="3EP0"/>
    </source>
</evidence>
<proteinExistence type="evidence at protein level"/>
<dbReference type="EMBL" id="AY004252">
    <property type="protein sequence ID" value="AAG13447.2"/>
    <property type="molecule type" value="mRNA"/>
</dbReference>
<dbReference type="EMBL" id="AL359092">
    <property type="status" value="NOT_ANNOTATED_CDS"/>
    <property type="molecule type" value="Genomic_DNA"/>
</dbReference>
<dbReference type="EMBL" id="CH471090">
    <property type="protein sequence ID" value="EAW87940.1"/>
    <property type="molecule type" value="Genomic_DNA"/>
</dbReference>
<dbReference type="CCDS" id="CCDS6934.1"/>
<dbReference type="RefSeq" id="NP_067632.2">
    <property type="nucleotide sequence ID" value="NM_021619.2"/>
</dbReference>
<dbReference type="PDB" id="3EP0">
    <property type="method" value="X-ray"/>
    <property type="resolution" value="2.10 A"/>
    <property type="chains" value="A/B=60-229"/>
</dbReference>
<dbReference type="PDBsum" id="3EP0"/>
<dbReference type="SMR" id="Q9H4Q4"/>
<dbReference type="BioGRID" id="121878">
    <property type="interactions" value="8"/>
</dbReference>
<dbReference type="FunCoup" id="Q9H4Q4">
    <property type="interactions" value="1211"/>
</dbReference>
<dbReference type="IntAct" id="Q9H4Q4">
    <property type="interactions" value="2"/>
</dbReference>
<dbReference type="STRING" id="9606.ENSP00000253008"/>
<dbReference type="ChEMBL" id="CHEMBL5214854"/>
<dbReference type="GlyGen" id="Q9H4Q4">
    <property type="glycosylation" value="1 site, 1 O-linked glycan (1 site)"/>
</dbReference>
<dbReference type="iPTMnet" id="Q9H4Q4"/>
<dbReference type="PhosphoSitePlus" id="Q9H4Q4"/>
<dbReference type="BioMuta" id="PRDM12"/>
<dbReference type="DMDM" id="25008955"/>
<dbReference type="MassIVE" id="Q9H4Q4"/>
<dbReference type="PaxDb" id="9606-ENSP00000253008"/>
<dbReference type="PeptideAtlas" id="Q9H4Q4"/>
<dbReference type="ProteomicsDB" id="80872"/>
<dbReference type="Antibodypedia" id="17995">
    <property type="antibodies" value="130 antibodies from 26 providers"/>
</dbReference>
<dbReference type="DNASU" id="59335"/>
<dbReference type="Ensembl" id="ENST00000253008.3">
    <property type="protein sequence ID" value="ENSP00000253008.2"/>
    <property type="gene ID" value="ENSG00000130711.5"/>
</dbReference>
<dbReference type="GeneID" id="59335"/>
<dbReference type="KEGG" id="hsa:59335"/>
<dbReference type="MANE-Select" id="ENST00000253008.3">
    <property type="protein sequence ID" value="ENSP00000253008.2"/>
    <property type="RefSeq nucleotide sequence ID" value="NM_021619.3"/>
    <property type="RefSeq protein sequence ID" value="NP_067632.2"/>
</dbReference>
<dbReference type="UCSC" id="uc004bzt.2">
    <property type="organism name" value="human"/>
</dbReference>
<dbReference type="AGR" id="HGNC:13997"/>
<dbReference type="CTD" id="59335"/>
<dbReference type="DisGeNET" id="59335"/>
<dbReference type="GeneCards" id="PRDM12"/>
<dbReference type="GeneReviews" id="PRDM12"/>
<dbReference type="HGNC" id="HGNC:13997">
    <property type="gene designation" value="PRDM12"/>
</dbReference>
<dbReference type="HPA" id="ENSG00000130711">
    <property type="expression patterns" value="Not detected"/>
</dbReference>
<dbReference type="MalaCards" id="PRDM12"/>
<dbReference type="MIM" id="616458">
    <property type="type" value="gene"/>
</dbReference>
<dbReference type="MIM" id="616488">
    <property type="type" value="phenotype"/>
</dbReference>
<dbReference type="neXtProt" id="NX_Q9H4Q4"/>
<dbReference type="OpenTargets" id="ENSG00000130711"/>
<dbReference type="Orphanet" id="478664">
    <property type="disease" value="Hereditary sensory and autonomic neuropathy type 8"/>
</dbReference>
<dbReference type="PharmGKB" id="PA33710"/>
<dbReference type="VEuPathDB" id="HostDB:ENSG00000130711"/>
<dbReference type="eggNOG" id="KOG2461">
    <property type="taxonomic scope" value="Eukaryota"/>
</dbReference>
<dbReference type="GeneTree" id="ENSGT00940000161616"/>
<dbReference type="HOGENOM" id="CLU_064013_0_1_1"/>
<dbReference type="InParanoid" id="Q9H4Q4"/>
<dbReference type="OMA" id="KHEDFHL"/>
<dbReference type="OrthoDB" id="8117402at2759"/>
<dbReference type="PAN-GO" id="Q9H4Q4">
    <property type="GO annotations" value="5 GO annotations based on evolutionary models"/>
</dbReference>
<dbReference type="PhylomeDB" id="Q9H4Q4"/>
<dbReference type="TreeFam" id="TF332260"/>
<dbReference type="PathwayCommons" id="Q9H4Q4"/>
<dbReference type="BioGRID-ORCS" id="59335">
    <property type="hits" value="19 hits in 1173 CRISPR screens"/>
</dbReference>
<dbReference type="ChiTaRS" id="PRDM12">
    <property type="organism name" value="human"/>
</dbReference>
<dbReference type="EvolutionaryTrace" id="Q9H4Q4"/>
<dbReference type="GenomeRNAi" id="59335"/>
<dbReference type="Pharos" id="Q9H4Q4">
    <property type="development level" value="Tbio"/>
</dbReference>
<dbReference type="PRO" id="PR:Q9H4Q4"/>
<dbReference type="Proteomes" id="UP000005640">
    <property type="component" value="Chromosome 9"/>
</dbReference>
<dbReference type="RNAct" id="Q9H4Q4">
    <property type="molecule type" value="protein"/>
</dbReference>
<dbReference type="Bgee" id="ENSG00000130711">
    <property type="expression patterns" value="Expressed in buccal mucosa cell and 29 other cell types or tissues"/>
</dbReference>
<dbReference type="ExpressionAtlas" id="Q9H4Q4">
    <property type="expression patterns" value="baseline and differential"/>
</dbReference>
<dbReference type="GO" id="GO:0005654">
    <property type="term" value="C:nucleoplasm"/>
    <property type="evidence" value="ECO:0000314"/>
    <property type="project" value="HPA"/>
</dbReference>
<dbReference type="GO" id="GO:0005634">
    <property type="term" value="C:nucleus"/>
    <property type="evidence" value="ECO:0000314"/>
    <property type="project" value="MGI"/>
</dbReference>
<dbReference type="GO" id="GO:0003677">
    <property type="term" value="F:DNA binding"/>
    <property type="evidence" value="ECO:0007669"/>
    <property type="project" value="UniProtKB-KW"/>
</dbReference>
<dbReference type="GO" id="GO:0140713">
    <property type="term" value="F:histone chaperone activity"/>
    <property type="evidence" value="ECO:0000314"/>
    <property type="project" value="MGI"/>
</dbReference>
<dbReference type="GO" id="GO:1990226">
    <property type="term" value="F:histone methyltransferase binding"/>
    <property type="evidence" value="ECO:0000314"/>
    <property type="project" value="MGI"/>
</dbReference>
<dbReference type="GO" id="GO:0008168">
    <property type="term" value="F:methyltransferase activity"/>
    <property type="evidence" value="ECO:0007669"/>
    <property type="project" value="UniProtKB-KW"/>
</dbReference>
<dbReference type="GO" id="GO:0008270">
    <property type="term" value="F:zinc ion binding"/>
    <property type="evidence" value="ECO:0007669"/>
    <property type="project" value="UniProtKB-KW"/>
</dbReference>
<dbReference type="GO" id="GO:0050965">
    <property type="term" value="P:detection of temperature stimulus involved in sensory perception of pain"/>
    <property type="evidence" value="ECO:0000315"/>
    <property type="project" value="MGI"/>
</dbReference>
<dbReference type="GO" id="GO:0000122">
    <property type="term" value="P:negative regulation of transcription by RNA polymerase II"/>
    <property type="evidence" value="ECO:0000250"/>
    <property type="project" value="ARUK-UCL"/>
</dbReference>
<dbReference type="GO" id="GO:0022008">
    <property type="term" value="P:neurogenesis"/>
    <property type="evidence" value="ECO:0000318"/>
    <property type="project" value="GO_Central"/>
</dbReference>
<dbReference type="GO" id="GO:0031175">
    <property type="term" value="P:neuron projection development"/>
    <property type="evidence" value="ECO:0000315"/>
    <property type="project" value="MGI"/>
</dbReference>
<dbReference type="GO" id="GO:0006479">
    <property type="term" value="P:protein methylation"/>
    <property type="evidence" value="ECO:0000314"/>
    <property type="project" value="MGI"/>
</dbReference>
<dbReference type="GO" id="GO:0010468">
    <property type="term" value="P:regulation of gene expression"/>
    <property type="evidence" value="ECO:0000318"/>
    <property type="project" value="GO_Central"/>
</dbReference>
<dbReference type="GO" id="GO:0019233">
    <property type="term" value="P:sensory perception of pain"/>
    <property type="evidence" value="ECO:0000315"/>
    <property type="project" value="MGI"/>
</dbReference>
<dbReference type="CDD" id="cd19196">
    <property type="entry name" value="PR-SET_PRDM12"/>
    <property type="match status" value="1"/>
</dbReference>
<dbReference type="FunFam" id="2.170.270.10:FF:000018">
    <property type="entry name" value="PR domain zinc finger protein 12"/>
    <property type="match status" value="1"/>
</dbReference>
<dbReference type="FunFam" id="3.30.160.60:FF:000501">
    <property type="entry name" value="PR domain zinc finger protein 12"/>
    <property type="match status" value="1"/>
</dbReference>
<dbReference type="FunFam" id="3.30.160.60:FF:000526">
    <property type="entry name" value="PR domain zinc finger protein 12"/>
    <property type="match status" value="1"/>
</dbReference>
<dbReference type="FunFam" id="3.30.160.60:FF:001416">
    <property type="entry name" value="PR domain zinc finger protein 12"/>
    <property type="match status" value="1"/>
</dbReference>
<dbReference type="Gene3D" id="3.30.160.60">
    <property type="entry name" value="Classic Zinc Finger"/>
    <property type="match status" value="3"/>
</dbReference>
<dbReference type="Gene3D" id="2.170.270.10">
    <property type="entry name" value="SET domain"/>
    <property type="match status" value="1"/>
</dbReference>
<dbReference type="InterPro" id="IPR044406">
    <property type="entry name" value="PRDM12_PR/SET"/>
</dbReference>
<dbReference type="InterPro" id="IPR001214">
    <property type="entry name" value="SET_dom"/>
</dbReference>
<dbReference type="InterPro" id="IPR046341">
    <property type="entry name" value="SET_dom_sf"/>
</dbReference>
<dbReference type="InterPro" id="IPR050331">
    <property type="entry name" value="Zinc_finger"/>
</dbReference>
<dbReference type="InterPro" id="IPR036236">
    <property type="entry name" value="Znf_C2H2_sf"/>
</dbReference>
<dbReference type="InterPro" id="IPR013087">
    <property type="entry name" value="Znf_C2H2_type"/>
</dbReference>
<dbReference type="InterPro" id="IPR017126">
    <property type="entry name" value="Znf_PRDM12"/>
</dbReference>
<dbReference type="PANTHER" id="PTHR16515">
    <property type="entry name" value="PR DOMAIN ZINC FINGER PROTEIN"/>
    <property type="match status" value="1"/>
</dbReference>
<dbReference type="PANTHER" id="PTHR16515:SF20">
    <property type="entry name" value="PR DOMAIN ZINC FINGER PROTEIN 12"/>
    <property type="match status" value="1"/>
</dbReference>
<dbReference type="Pfam" id="PF21549">
    <property type="entry name" value="PRDM2_PR"/>
    <property type="match status" value="1"/>
</dbReference>
<dbReference type="Pfam" id="PF00096">
    <property type="entry name" value="zf-C2H2"/>
    <property type="match status" value="2"/>
</dbReference>
<dbReference type="PIRSF" id="PIRSF037163">
    <property type="entry name" value="PRDM12"/>
    <property type="match status" value="1"/>
</dbReference>
<dbReference type="SMART" id="SM00317">
    <property type="entry name" value="SET"/>
    <property type="match status" value="1"/>
</dbReference>
<dbReference type="SMART" id="SM00355">
    <property type="entry name" value="ZnF_C2H2"/>
    <property type="match status" value="3"/>
</dbReference>
<dbReference type="SUPFAM" id="SSF57667">
    <property type="entry name" value="beta-beta-alpha zinc fingers"/>
    <property type="match status" value="2"/>
</dbReference>
<dbReference type="SUPFAM" id="SSF82199">
    <property type="entry name" value="SET domain"/>
    <property type="match status" value="1"/>
</dbReference>
<dbReference type="PROSITE" id="PS50280">
    <property type="entry name" value="SET"/>
    <property type="match status" value="1"/>
</dbReference>
<dbReference type="PROSITE" id="PS00028">
    <property type="entry name" value="ZINC_FINGER_C2H2_1"/>
    <property type="match status" value="3"/>
</dbReference>
<dbReference type="PROSITE" id="PS50157">
    <property type="entry name" value="ZINC_FINGER_C2H2_2"/>
    <property type="match status" value="3"/>
</dbReference>
<feature type="chain" id="PRO_0000047769" description="PR domain zinc finger protein 12">
    <location>
        <begin position="1"/>
        <end position="367"/>
    </location>
</feature>
<feature type="domain" description="SET" evidence="3">
    <location>
        <begin position="86"/>
        <end position="203"/>
    </location>
</feature>
<feature type="zinc finger region" description="C2H2-type 1" evidence="2">
    <location>
        <begin position="243"/>
        <end position="265"/>
    </location>
</feature>
<feature type="zinc finger region" description="C2H2-type 2" evidence="2">
    <location>
        <begin position="271"/>
        <end position="293"/>
    </location>
</feature>
<feature type="zinc finger region" description="C2H2-type 3" evidence="2">
    <location>
        <begin position="299"/>
        <end position="323"/>
    </location>
</feature>
<feature type="region of interest" description="Disordered" evidence="4">
    <location>
        <begin position="318"/>
        <end position="337"/>
    </location>
</feature>
<feature type="sequence variant" id="VAR_074617" description="In HSAN8; no effect on nuclear localization; no effect on its interaction with EHMT2; dbSNP:rs879255637." evidence="5">
    <original>D</original>
    <variation>Y</variation>
    <location>
        <position position="31"/>
    </location>
</feature>
<feature type="sequence variant" id="VAR_074618" description="In HSAN8; no effect on nuclear localization; no effect on its interaction with EHMT2; dbSNP:rs879255636." evidence="5">
    <original>I</original>
    <variation>N</variation>
    <location>
        <position position="102"/>
    </location>
</feature>
<feature type="sequence variant" id="VAR_074619" description="In HSAN8; no effect on nuclear localization; no effect on its interaction with EHMT2." evidence="5">
    <original>W</original>
    <variation>C</variation>
    <location>
        <position position="160"/>
    </location>
</feature>
<feature type="sequence variant" id="VAR_074620" description="In HSAN8; no effect on nuclear localization; no effect on its interaction with EHMT2; dbSNP:rs767397937." evidence="5">
    <original>R</original>
    <variation>C</variation>
    <location>
        <position position="168"/>
    </location>
</feature>
<feature type="sequence variant" id="VAR_074621" description="In HSAN8; no effect on nuclear localization; no effect on its interaction with EHMT2; dbSNP:rs755205487." evidence="5">
    <original>E</original>
    <variation>D</variation>
    <location>
        <position position="172"/>
    </location>
</feature>
<feature type="sequence variant" id="VAR_074622" description="In HSAN8; no effect on nuclear localization; Significantly reduced interaction with EHMT2; dbSNP:rs879255638." evidence="5">
    <original>H</original>
    <variation>L</variation>
    <location>
        <position position="289"/>
    </location>
</feature>
<feature type="sequence variant" id="VAR_074623" description="In HSAN8; reduced protein amount; results in protein aggregation." evidence="5">
    <original>A</original>
    <variation>AAAAAAAA</variation>
    <location>
        <position position="352"/>
    </location>
</feature>
<feature type="strand" evidence="6">
    <location>
        <begin position="78"/>
        <end position="83"/>
    </location>
</feature>
<feature type="strand" evidence="6">
    <location>
        <begin position="88"/>
        <end position="92"/>
    </location>
</feature>
<feature type="strand" evidence="6">
    <location>
        <begin position="94"/>
        <end position="97"/>
    </location>
</feature>
<feature type="strand" evidence="6">
    <location>
        <begin position="99"/>
        <end position="106"/>
    </location>
</feature>
<feature type="strand" evidence="6">
    <location>
        <begin position="113"/>
        <end position="117"/>
    </location>
</feature>
<feature type="strand" evidence="6">
    <location>
        <begin position="120"/>
        <end position="122"/>
    </location>
</feature>
<feature type="strand" evidence="6">
    <location>
        <begin position="136"/>
        <end position="140"/>
    </location>
</feature>
<feature type="strand" evidence="6">
    <location>
        <begin position="144"/>
        <end position="151"/>
    </location>
</feature>
<feature type="helix" evidence="6">
    <location>
        <begin position="160"/>
        <end position="163"/>
    </location>
</feature>
<feature type="turn" evidence="6">
    <location>
        <begin position="170"/>
        <end position="172"/>
    </location>
</feature>
<feature type="strand" evidence="6">
    <location>
        <begin position="175"/>
        <end position="180"/>
    </location>
</feature>
<feature type="strand" evidence="6">
    <location>
        <begin position="183"/>
        <end position="190"/>
    </location>
</feature>
<feature type="strand" evidence="6">
    <location>
        <begin position="199"/>
        <end position="202"/>
    </location>
</feature>
<protein>
    <recommendedName>
        <fullName>PR domain zinc finger protein 12</fullName>
    </recommendedName>
    <alternativeName>
        <fullName>PR domain-containing protein 12</fullName>
    </alternativeName>
</protein>
<keyword id="KW-0002">3D-structure</keyword>
<keyword id="KW-0010">Activator</keyword>
<keyword id="KW-0225">Disease variant</keyword>
<keyword id="KW-0238">DNA-binding</keyword>
<keyword id="KW-0479">Metal-binding</keyword>
<keyword id="KW-0523">Neurodegeneration</keyword>
<keyword id="KW-0622">Neuropathy</keyword>
<keyword id="KW-0539">Nucleus</keyword>
<keyword id="KW-1185">Reference proteome</keyword>
<keyword id="KW-0677">Repeat</keyword>
<keyword id="KW-0678">Repressor</keyword>
<keyword id="KW-0804">Transcription</keyword>
<keyword id="KW-0805">Transcription regulation</keyword>
<keyword id="KW-0818">Triplet repeat expansion</keyword>
<keyword id="KW-0862">Zinc</keyword>
<keyword id="KW-0863">Zinc-finger</keyword>
<sequence length="367" mass="40403">MMGSVLPAEALVLKTGLKAPGLALAEVITSDILHSFLYGRWRNVLGEQLFEDKSHHASPKTAFTAEVLAQSFSGEVQKLSSLVLPAEVIIAQSSIPGEGLGIFSKTWIKAGTEMGPFTGRVIAPEHVDICKNNNLMWEVFNEDGTVRYFIDASQEDHRSWMTYIKCARNEQEQNLEVVQIGTSIFYKAIEMIPPDQELLVWYGNSHNTFLGIPGVPGLEEDQKKNKHEDFHPADSAAGPAGRMRCVICHRGFNSRSNLRSHMRIHTLDKPFVCRFCNRRFSQSSTLRNHVRLHTGERPYKCQVCQSAYSQLAGLRAHQKSARHRPPSTALQAHSPALPAPHAHAPALAAAAAAAAAAAAHHLPAMVL</sequence>
<name>PRD12_HUMAN</name>
<reference key="1">
    <citation type="submission" date="2001-07" db="EMBL/GenBank/DDBJ databases">
        <title>A family of novel PR-domain (PRDM) genes as candidate tumor suppressors.</title>
        <authorList>
            <person name="Yang X.-H."/>
            <person name="Huang S."/>
        </authorList>
    </citation>
    <scope>NUCLEOTIDE SEQUENCE [MRNA]</scope>
</reference>
<reference key="2">
    <citation type="journal article" date="2004" name="Nature">
        <title>DNA sequence and analysis of human chromosome 9.</title>
        <authorList>
            <person name="Humphray S.J."/>
            <person name="Oliver K."/>
            <person name="Hunt A.R."/>
            <person name="Plumb R.W."/>
            <person name="Loveland J.E."/>
            <person name="Howe K.L."/>
            <person name="Andrews T.D."/>
            <person name="Searle S."/>
            <person name="Hunt S.E."/>
            <person name="Scott C.E."/>
            <person name="Jones M.C."/>
            <person name="Ainscough R."/>
            <person name="Almeida J.P."/>
            <person name="Ambrose K.D."/>
            <person name="Ashwell R.I.S."/>
            <person name="Babbage A.K."/>
            <person name="Babbage S."/>
            <person name="Bagguley C.L."/>
            <person name="Bailey J."/>
            <person name="Banerjee R."/>
            <person name="Barker D.J."/>
            <person name="Barlow K.F."/>
            <person name="Bates K."/>
            <person name="Beasley H."/>
            <person name="Beasley O."/>
            <person name="Bird C.P."/>
            <person name="Bray-Allen S."/>
            <person name="Brown A.J."/>
            <person name="Brown J.Y."/>
            <person name="Burford D."/>
            <person name="Burrill W."/>
            <person name="Burton J."/>
            <person name="Carder C."/>
            <person name="Carter N.P."/>
            <person name="Chapman J.C."/>
            <person name="Chen Y."/>
            <person name="Clarke G."/>
            <person name="Clark S.Y."/>
            <person name="Clee C.M."/>
            <person name="Clegg S."/>
            <person name="Collier R.E."/>
            <person name="Corby N."/>
            <person name="Crosier M."/>
            <person name="Cummings A.T."/>
            <person name="Davies J."/>
            <person name="Dhami P."/>
            <person name="Dunn M."/>
            <person name="Dutta I."/>
            <person name="Dyer L.W."/>
            <person name="Earthrowl M.E."/>
            <person name="Faulkner L."/>
            <person name="Fleming C.J."/>
            <person name="Frankish A."/>
            <person name="Frankland J.A."/>
            <person name="French L."/>
            <person name="Fricker D.G."/>
            <person name="Garner P."/>
            <person name="Garnett J."/>
            <person name="Ghori J."/>
            <person name="Gilbert J.G.R."/>
            <person name="Glison C."/>
            <person name="Grafham D.V."/>
            <person name="Gribble S."/>
            <person name="Griffiths C."/>
            <person name="Griffiths-Jones S."/>
            <person name="Grocock R."/>
            <person name="Guy J."/>
            <person name="Hall R.E."/>
            <person name="Hammond S."/>
            <person name="Harley J.L."/>
            <person name="Harrison E.S.I."/>
            <person name="Hart E.A."/>
            <person name="Heath P.D."/>
            <person name="Henderson C.D."/>
            <person name="Hopkins B.L."/>
            <person name="Howard P.J."/>
            <person name="Howden P.J."/>
            <person name="Huckle E."/>
            <person name="Johnson C."/>
            <person name="Johnson D."/>
            <person name="Joy A.A."/>
            <person name="Kay M."/>
            <person name="Keenan S."/>
            <person name="Kershaw J.K."/>
            <person name="Kimberley A.M."/>
            <person name="King A."/>
            <person name="Knights A."/>
            <person name="Laird G.K."/>
            <person name="Langford C."/>
            <person name="Lawlor S."/>
            <person name="Leongamornlert D.A."/>
            <person name="Leversha M."/>
            <person name="Lloyd C."/>
            <person name="Lloyd D.M."/>
            <person name="Lovell J."/>
            <person name="Martin S."/>
            <person name="Mashreghi-Mohammadi M."/>
            <person name="Matthews L."/>
            <person name="McLaren S."/>
            <person name="McLay K.E."/>
            <person name="McMurray A."/>
            <person name="Milne S."/>
            <person name="Nickerson T."/>
            <person name="Nisbett J."/>
            <person name="Nordsiek G."/>
            <person name="Pearce A.V."/>
            <person name="Peck A.I."/>
            <person name="Porter K.M."/>
            <person name="Pandian R."/>
            <person name="Pelan S."/>
            <person name="Phillimore B."/>
            <person name="Povey S."/>
            <person name="Ramsey Y."/>
            <person name="Rand V."/>
            <person name="Scharfe M."/>
            <person name="Sehra H.K."/>
            <person name="Shownkeen R."/>
            <person name="Sims S.K."/>
            <person name="Skuce C.D."/>
            <person name="Smith M."/>
            <person name="Steward C.A."/>
            <person name="Swarbreck D."/>
            <person name="Sycamore N."/>
            <person name="Tester J."/>
            <person name="Thorpe A."/>
            <person name="Tracey A."/>
            <person name="Tromans A."/>
            <person name="Thomas D.W."/>
            <person name="Wall M."/>
            <person name="Wallis J.M."/>
            <person name="West A.P."/>
            <person name="Whitehead S.L."/>
            <person name="Willey D.L."/>
            <person name="Williams S.A."/>
            <person name="Wilming L."/>
            <person name="Wray P.W."/>
            <person name="Young L."/>
            <person name="Ashurst J.L."/>
            <person name="Coulson A."/>
            <person name="Blocker H."/>
            <person name="Durbin R.M."/>
            <person name="Sulston J.E."/>
            <person name="Hubbard T."/>
            <person name="Jackson M.J."/>
            <person name="Bentley D.R."/>
            <person name="Beck S."/>
            <person name="Rogers J."/>
            <person name="Dunham I."/>
        </authorList>
    </citation>
    <scope>NUCLEOTIDE SEQUENCE [LARGE SCALE GENOMIC DNA]</scope>
</reference>
<reference key="3">
    <citation type="submission" date="2005-07" db="EMBL/GenBank/DDBJ databases">
        <authorList>
            <person name="Mural R.J."/>
            <person name="Istrail S."/>
            <person name="Sutton G.G."/>
            <person name="Florea L."/>
            <person name="Halpern A.L."/>
            <person name="Mobarry C.M."/>
            <person name="Lippert R."/>
            <person name="Walenz B."/>
            <person name="Shatkay H."/>
            <person name="Dew I."/>
            <person name="Miller J.R."/>
            <person name="Flanigan M.J."/>
            <person name="Edwards N.J."/>
            <person name="Bolanos R."/>
            <person name="Fasulo D."/>
            <person name="Halldorsson B.V."/>
            <person name="Hannenhalli S."/>
            <person name="Turner R."/>
            <person name="Yooseph S."/>
            <person name="Lu F."/>
            <person name="Nusskern D.R."/>
            <person name="Shue B.C."/>
            <person name="Zheng X.H."/>
            <person name="Zhong F."/>
            <person name="Delcher A.L."/>
            <person name="Huson D.H."/>
            <person name="Kravitz S.A."/>
            <person name="Mouchard L."/>
            <person name="Reinert K."/>
            <person name="Remington K.A."/>
            <person name="Clark A.G."/>
            <person name="Waterman M.S."/>
            <person name="Eichler E.E."/>
            <person name="Adams M.D."/>
            <person name="Hunkapiller M.W."/>
            <person name="Myers E.W."/>
            <person name="Venter J.C."/>
        </authorList>
    </citation>
    <scope>NUCLEOTIDE SEQUENCE [LARGE SCALE GENOMIC DNA]</scope>
</reference>
<reference key="4">
    <citation type="submission" date="2009-02" db="PDB data bank">
        <title>The crystal structure of methyltransferase domain of human PR domain-containing protein 12.</title>
        <authorList>
            <consortium name="Structural genomics consortium (SGC)"/>
        </authorList>
    </citation>
    <scope>X-RAY CRYSTALLOGRAPHY (2.1 ANGSTROMS) OF 60-229</scope>
</reference>
<reference key="5">
    <citation type="journal article" date="2015" name="Nat. Genet.">
        <title>Transcriptional regulator PRDM12 is essential for human pain perception.</title>
        <authorList>
            <person name="Chen Y.C."/>
            <person name="Auer-Grumbach M."/>
            <person name="Matsukawa S."/>
            <person name="Zitzelsberger M."/>
            <person name="Themistocleous A.C."/>
            <person name="Strom T.M."/>
            <person name="Samara C."/>
            <person name="Moore A.W."/>
            <person name="Cho L.T."/>
            <person name="Young G.T."/>
            <person name="Weiss C."/>
            <person name="Schabhuettl M."/>
            <person name="Stucka R."/>
            <person name="Schmid A.B."/>
            <person name="Parman Y."/>
            <person name="Graul-Neumann L."/>
            <person name="Heinritz W."/>
            <person name="Passarge E."/>
            <person name="Watson R.M."/>
            <person name="Hertz J.M."/>
            <person name="Moog U."/>
            <person name="Baumgartner M."/>
            <person name="Valente E.M."/>
            <person name="Pereira D."/>
            <person name="Restrepo C.M."/>
            <person name="Katona I."/>
            <person name="Dusl M."/>
            <person name="Stendel C."/>
            <person name="Wieland T."/>
            <person name="Stafford F."/>
            <person name="Reimann F."/>
            <person name="von Au K."/>
            <person name="Finke C."/>
            <person name="Willems P.J."/>
            <person name="Nahorski M.S."/>
            <person name="Shaikh S.S."/>
            <person name="Carvalho O.P."/>
            <person name="Nicholas A.K."/>
            <person name="Karbani G."/>
            <person name="McAleer M.A."/>
            <person name="Cilio M.R."/>
            <person name="McHugh J.C."/>
            <person name="Murphy S.M."/>
            <person name="Irvine A.D."/>
            <person name="Jensen U.B."/>
            <person name="Windhager R."/>
            <person name="Weis J."/>
            <person name="Bergmann C."/>
            <person name="Rautenstrauss B."/>
            <person name="Baets J."/>
            <person name="De Jonghe P."/>
            <person name="Reilly M.M."/>
            <person name="Kropatsch R."/>
            <person name="Kurth I."/>
            <person name="Chrast R."/>
            <person name="Michiue T."/>
            <person name="Bennett D.L."/>
            <person name="Woods C.G."/>
            <person name="Senderek J."/>
        </authorList>
    </citation>
    <scope>INTERACTION WITH EHMT2</scope>
    <scope>TISSUE SPECIFICITY</scope>
    <scope>SUBCELLULAR LOCATION</scope>
    <scope>POLYMORPHISM</scope>
    <scope>INVOLVEMENT IN HSAN8</scope>
    <scope>VARIANTS HSAN8 TYR-31; ASN-102; CYS-160; CYS-168; ASP-172; LEU-289 AND ALA-ALA-ALA-ALA-ALA-ALA-ALA-352 INS</scope>
    <scope>CHARACTERIZATION OF VARIANTS HSAN8 TYR-31; ASN-102; CYS-160; CYS-168; ASP-172; LEU-289 AND ALA-ALA-ALA-ALA-ALA-ALA-ALA-352 INS</scope>
</reference>
<organism>
    <name type="scientific">Homo sapiens</name>
    <name type="common">Human</name>
    <dbReference type="NCBI Taxonomy" id="9606"/>
    <lineage>
        <taxon>Eukaryota</taxon>
        <taxon>Metazoa</taxon>
        <taxon>Chordata</taxon>
        <taxon>Craniata</taxon>
        <taxon>Vertebrata</taxon>
        <taxon>Euteleostomi</taxon>
        <taxon>Mammalia</taxon>
        <taxon>Eutheria</taxon>
        <taxon>Euarchontoglires</taxon>
        <taxon>Primates</taxon>
        <taxon>Haplorrhini</taxon>
        <taxon>Catarrhini</taxon>
        <taxon>Hominidae</taxon>
        <taxon>Homo</taxon>
    </lineage>
</organism>
<accession>Q9H4Q4</accession>
<accession>A3KFK9</accession>
<comment type="function">
    <text evidence="1">Transcriptional regulator necessary for the development of nociceptive neurons, playing a key role in determining the nociceptive lineage from neural crest cell progenitors. Initiates neurogenesis and activates downstream pro-neuronal transcription factors, such as NEUROD1, BRN3A, and ISL1, specifically within nociceptive neurons, while repressing non-nociceptor cell fates. Essential for the proper function of nociceptors in adults, influencing both their excitability and their gene expression, thereby impacting how these neurons respond to various pain stimuli.</text>
</comment>
<comment type="subunit">
    <text evidence="5">Interacts with EHMT2.</text>
</comment>
<comment type="subcellular location">
    <subcellularLocation>
        <location evidence="5">Nucleus</location>
    </subcellularLocation>
</comment>
<comment type="tissue specificity">
    <text evidence="5">Not found in adult tissues except in dorsal root ganglia.</text>
</comment>
<comment type="polymorphism">
    <text evidence="5">The poly-alanine tract is polymorphic in the general population and contains a maximum of 14 alanines.</text>
</comment>
<comment type="disease" evidence="5">
    <disease id="DI-04493">
        <name>Neuropathy, hereditary sensory and autonomic, 8</name>
        <acronym>HSAN8</acronym>
        <description>A form of hereditary sensory and autonomic neuropathy, a genetically and clinically heterogeneous group of disorders characterized by degeneration of dorsal root and autonomic ganglion cells, and by sensory and/or autonomic abnormalities. HSAN8 patients manifest congenital insensitivity to pain resulting in ulceration to the fingers, tongue, lips, and other distal appendages. Some patients may also have decreased sweating and tear production.</description>
        <dbReference type="MIM" id="616488"/>
    </disease>
    <text>The disease is caused by variants affecting the gene represented in this entry.</text>
</comment>
<comment type="similarity">
    <text evidence="3">Belongs to the class V-like SAM-binding methyltransferase superfamily.</text>
</comment>